<accession>P69718</accession>
<accession>P04617</accession>
<gene>
    <name evidence="1" type="primary">rev</name>
</gene>
<sequence>MAGRSGDSDEDLLKAVRLIKFLYQSNPPPNPEGTRQARRNRRRRWRERQRQIHSISERILSTYLGRSAEPVPLQLPPLERLTLDCNEDCGTSGTQGVGSPQILVESPTILESGAKE</sequence>
<dbReference type="EMBL" id="M14100">
    <property type="protein sequence ID" value="AAA44677.1"/>
    <property type="molecule type" value="Genomic_RNA"/>
</dbReference>
<dbReference type="PIR" id="S33983">
    <property type="entry name" value="S33983"/>
</dbReference>
<dbReference type="PDB" id="3LPH">
    <property type="method" value="X-ray"/>
    <property type="resolution" value="2.50 A"/>
    <property type="chains" value="A/B/C/D=1-70"/>
</dbReference>
<dbReference type="PDB" id="4PMI">
    <property type="method" value="X-ray"/>
    <property type="resolution" value="3.20 A"/>
    <property type="chains" value="B/C=1-70"/>
</dbReference>
<dbReference type="PDBsum" id="3LPH"/>
<dbReference type="PDBsum" id="4PMI"/>
<dbReference type="EMDB" id="EMD-6439"/>
<dbReference type="SMR" id="P69718"/>
<dbReference type="DIP" id="DIP-61764N"/>
<dbReference type="IntAct" id="P69718">
    <property type="interactions" value="2"/>
</dbReference>
<dbReference type="MINT" id="P69718"/>
<dbReference type="iPTMnet" id="P69718"/>
<dbReference type="EvolutionaryTrace" id="P69718"/>
<dbReference type="GO" id="GO:0030430">
    <property type="term" value="C:host cell cytoplasm"/>
    <property type="evidence" value="ECO:0007669"/>
    <property type="project" value="UniProtKB-SubCell"/>
</dbReference>
<dbReference type="GO" id="GO:0044196">
    <property type="term" value="C:host cell nucleolus"/>
    <property type="evidence" value="ECO:0007669"/>
    <property type="project" value="UniProtKB-SubCell"/>
</dbReference>
<dbReference type="GO" id="GO:0003700">
    <property type="term" value="F:DNA-binding transcription factor activity"/>
    <property type="evidence" value="ECO:0007669"/>
    <property type="project" value="UniProtKB-UniRule"/>
</dbReference>
<dbReference type="GO" id="GO:0003723">
    <property type="term" value="F:RNA binding"/>
    <property type="evidence" value="ECO:0000269"/>
    <property type="project" value="DisProt"/>
</dbReference>
<dbReference type="GO" id="GO:0051028">
    <property type="term" value="P:mRNA transport"/>
    <property type="evidence" value="ECO:0007669"/>
    <property type="project" value="UniProtKB-UniRule"/>
</dbReference>
<dbReference type="GO" id="GO:1990173">
    <property type="term" value="P:protein localization to nucleoplasm"/>
    <property type="evidence" value="ECO:0000314"/>
    <property type="project" value="DisProt"/>
</dbReference>
<dbReference type="GO" id="GO:0016032">
    <property type="term" value="P:viral process"/>
    <property type="evidence" value="ECO:0007669"/>
    <property type="project" value="UniProtKB-UniRule"/>
</dbReference>
<dbReference type="Gene3D" id="6.10.140.630">
    <property type="match status" value="1"/>
</dbReference>
<dbReference type="HAMAP" id="MF_04077">
    <property type="entry name" value="REV_HIV1"/>
    <property type="match status" value="1"/>
</dbReference>
<dbReference type="InterPro" id="IPR000625">
    <property type="entry name" value="REV_protein"/>
</dbReference>
<dbReference type="Pfam" id="PF00424">
    <property type="entry name" value="REV"/>
    <property type="match status" value="1"/>
</dbReference>
<feature type="chain" id="PRO_0000085262" description="Protein Rev">
    <location>
        <begin position="1"/>
        <end position="116"/>
    </location>
</feature>
<feature type="region of interest" description="Homomultimerization" evidence="1">
    <location>
        <begin position="18"/>
        <end position="26"/>
    </location>
</feature>
<feature type="region of interest" description="Disordered" evidence="2">
    <location>
        <begin position="23"/>
        <end position="49"/>
    </location>
</feature>
<feature type="short sequence motif" description="Nuclear localization signal and RNA-binding (RRE)" evidence="1 15 17 20">
    <location>
        <begin position="34"/>
        <end position="50"/>
    </location>
</feature>
<feature type="short sequence motif" description="Nuclear export signal and binding to XPO1" evidence="1">
    <location>
        <begin position="73"/>
        <end position="84"/>
    </location>
</feature>
<feature type="compositionally biased region" description="Basic residues" evidence="2">
    <location>
        <begin position="36"/>
        <end position="47"/>
    </location>
</feature>
<feature type="modified residue" description="Phosphoserine; by host CK2" evidence="1">
    <location>
        <position position="5"/>
    </location>
</feature>
<feature type="modified residue" description="Phosphoserine; by host CK2" evidence="1">
    <location>
        <position position="8"/>
    </location>
</feature>
<feature type="modified residue" description="Phosphoserine; by host" evidence="1 16">
    <location>
        <position position="92"/>
    </location>
</feature>
<feature type="modified residue" description="Phosphoserine; by host" evidence="1 16">
    <location>
        <position position="99"/>
    </location>
</feature>
<feature type="mutagenesis site" description="Partial loss of expression of unspliced viral transcripts. No effect on phosphorylation." evidence="17">
    <original>RS</original>
    <variation>DL</variation>
    <location>
        <begin position="4"/>
        <end position="5"/>
    </location>
</feature>
<feature type="mutagenesis site" description="No effect on expression of unspliced viral transcripts. Decreased phosphorylation. No effect on subcellular location." evidence="17">
    <original>SD</original>
    <variation>DL</variation>
    <location>
        <begin position="8"/>
        <end position="9"/>
    </location>
</feature>
<feature type="mutagenesis site" description="No effect on expression of unspliced viral transcripts. No effect on phosphorylation. Expressed in nucleus and slightly in cytoplasm." evidence="17">
    <original>R</original>
    <variation>D</variation>
    <location>
        <position position="17"/>
    </location>
</feature>
<feature type="mutagenesis site" description="Complete loss of expression of unspliced viral transcripts. No effect on phosphorylation. Expressed in nucleus and slightly in cytoplasm." evidence="17">
    <original>YQSN</original>
    <variation>DQDL</variation>
    <location>
        <begin position="23"/>
        <end position="26"/>
    </location>
</feature>
<feature type="mutagenesis site" description="Complete loss of expression of unspliced viral transcripts. Decreased phosphorylation. Expressed in cytoplasm and slightly in nucleus." evidence="17">
    <original>RR</original>
    <variation>DL</variation>
    <location>
        <begin position="38"/>
        <end position="39"/>
    </location>
</feature>
<feature type="mutagenesis site" description="Complete loss of expression of unspliced viral transcripts. Complete loss of phosphorylation. Expressed in cytoplasm and slightly in nucleus." evidence="17">
    <original>RRRR</original>
    <variation>DL</variation>
    <location>
        <begin position="41"/>
        <end position="44"/>
    </location>
</feature>
<feature type="mutagenesis site" description="Complete loss of expression of unspliced viral transcripts. No effect on phosphorylation. Expressed in nucleus and slightly in cytoplasm." evidence="17">
    <original>SIS</original>
    <variation>I</variation>
    <location>
        <begin position="54"/>
        <end position="56"/>
    </location>
</feature>
<feature type="mutagenesis site" description="No effect on expression of unspliced viral transcripts. No effect on phosphorylation. Expressed in nucleus and slightly in cytoplasm." evidence="17">
    <original>ST</original>
    <variation>DL</variation>
    <location>
        <begin position="61"/>
        <end position="62"/>
    </location>
</feature>
<feature type="mutagenesis site" description="No effect on expression of unspliced viral transcripts. No effect on phosphorylation. No effect on subcellular location." evidence="17">
    <original>SA</original>
    <variation>DL</variation>
    <location>
        <begin position="67"/>
        <end position="68"/>
    </location>
</feature>
<feature type="mutagenesis site" description="Complete loss of expression of unspliced viral transcripts. No effect on phosphorylation. No effect on subcellular location." evidence="17">
    <original>LE</original>
    <variation>DL</variation>
    <location>
        <begin position="78"/>
        <end position="79"/>
    </location>
</feature>
<feature type="mutagenesis site" description="No effect on expression of unspliced viral transcripts. No effect on phosphorylation. No effect on subcellular location." evidence="17">
    <original>TS</original>
    <variation>DL</variation>
    <location>
        <begin position="91"/>
        <end position="92"/>
    </location>
</feature>
<feature type="mutagenesis site" description="Decreased phosphorylation." evidence="16">
    <original>S</original>
    <variation>R</variation>
    <location>
        <position position="92"/>
    </location>
</feature>
<feature type="mutagenesis site" description="No effect on expression of unspliced viral transcripts. Decreased phosphorylation. No effect on subcellular location." evidence="17">
    <original>SP</original>
    <variation>DL</variation>
    <location>
        <begin position="99"/>
        <end position="100"/>
    </location>
</feature>
<feature type="mutagenesis site" description="Decreased phosphorylation." evidence="16">
    <original>S</original>
    <variation>I</variation>
    <location>
        <position position="99"/>
    </location>
</feature>
<feature type="mutagenesis site" description="No effect on expression of unspliced viral transcripts. No effect on phosphorylation. No effect on subcellular location." evidence="17">
    <original>SPTI</original>
    <variation>DLTV</variation>
    <location>
        <begin position="106"/>
        <end position="109"/>
    </location>
</feature>
<feature type="mutagenesis site" description="Almost no effect on phosphorylation." evidence="16">
    <original>S</original>
    <variation>F</variation>
    <location>
        <position position="106"/>
    </location>
</feature>
<feature type="mutagenesis site" description="No effect on expression of unspliced viral transcripts. No effect on phosphorylation. No effect on subcellular location." evidence="17">
    <original>SG</original>
    <variation>DL</variation>
    <location>
        <begin position="112"/>
        <end position="113"/>
    </location>
</feature>
<feature type="mutagenesis site" description="Almost no effect on phosphorylation." evidence="16">
    <original>S</original>
    <variation>L</variation>
    <location>
        <position position="112"/>
    </location>
</feature>
<feature type="helix" evidence="21">
    <location>
        <begin position="11"/>
        <end position="24"/>
    </location>
</feature>
<feature type="helix" evidence="21">
    <location>
        <begin position="35"/>
        <end position="63"/>
    </location>
</feature>
<feature type="helix" evidence="21">
    <location>
        <begin position="65"/>
        <end position="67"/>
    </location>
</feature>
<organism>
    <name type="scientific">Human immunodeficiency virus type 1 group M subtype B (isolate HXB3)</name>
    <name type="common">HIV-1</name>
    <dbReference type="NCBI Taxonomy" id="11707"/>
    <lineage>
        <taxon>Viruses</taxon>
        <taxon>Riboviria</taxon>
        <taxon>Pararnavirae</taxon>
        <taxon>Artverviricota</taxon>
        <taxon>Revtraviricetes</taxon>
        <taxon>Ortervirales</taxon>
        <taxon>Retroviridae</taxon>
        <taxon>Orthoretrovirinae</taxon>
        <taxon>Lentivirus</taxon>
        <taxon>Human immunodeficiency virus type 1</taxon>
    </lineage>
</organism>
<organismHost>
    <name type="scientific">Homo sapiens</name>
    <name type="common">Human</name>
    <dbReference type="NCBI Taxonomy" id="9606"/>
</organismHost>
<proteinExistence type="evidence at protein level"/>
<comment type="function">
    <text evidence="1 6 18 19">Escorts unspliced or incompletely spliced viral pre-mRNAs (late transcripts) out of the nucleus of infected cells. These pre-mRNAs carry a recognition sequence called Rev responsive element (RRE) located in the env gene, that is not present in fully spliced viral mRNAs (early transcripts). This function is essential since most viral proteins are translated from unspliced or partially spliced pre-mRNAs which cannot exit the nucleus by the pathway used by fully processed cellular mRNAs. Rev itself is translated from a fully spliced mRNA that readily exits the nucleus. Rev's nuclear localization signal (NLS) binds directly to KPNB1/Importin beta-1 without previous binding to KPNA1/Importin alpha-1. KPNB1 binds to the GDP bound form of RAN (Ran-GDP) and targets Rev to the nucleus. In the nucleus, the conversion from Ran-GDP to Ran-GTP dissociates Rev from KPNB1 and allows Rev's binding to the RRE in viral pre-mRNAs. Rev multimerization on the RRE via cooperative assembly exposes its nuclear export signal (NES) to the surface. Rev can then form a complex with XPO1/CRM1 and Ran-GTP, leading to nuclear export of the complex. Conversion from Ran-GTP to Ran-GDP mediates dissociation of the Rev/RRE/XPO1/RAN complex, so that Rev can return to the nucleus for a subsequent round of export. Beside KPNB1, also seems to interact with TNPO1/Transportin-1, RANBP5/IPO5 and IPO7/RANBP7 for nuclear import. The nucleoporin-like HRB/RIP is an essential cofactor that probably indirectly interacts with Rev to release HIV RNAs from the perinuclear region to the cytoplasm.</text>
</comment>
<comment type="subunit">
    <text evidence="1 3 4 5 7 8 9 10 11 12 13 14 20">Homomultimer; when bound to the RRE. Multimeric assembly is essential for activity and may involve XPO1. Binds to human KPNB1, XPO1, TNPO1, RANBP5 and IPO7. Interacts with the viral Integrase. Interacts with human KHDRBS1. Interacts with human NAP1; this interaction decreases Rev multimerization and stimulates its activity. Interacts with human DEAD-box helicases DDX3 and DDX24; these interactions may serve for viral RNA export to the cytoplasm and packaging, respectively. Interacts with human PSIP1; this interaction may inhibit HIV-1 DNA integration by promoting dissociation of the Integrase-LEDGF/p75 complex.</text>
</comment>
<comment type="interaction">
    <interactant intactId="EBI-8540156">
        <id>P69718</id>
    </interactant>
    <interactant intactId="EBI-3989067">
        <id>P04585</id>
        <label>gag-pol</label>
    </interactant>
    <organismsDiffer>true</organismsDiffer>
    <experiments>8</experiments>
</comment>
<comment type="subcellular location">
    <subcellularLocation>
        <location evidence="1">Host nucleus</location>
        <location evidence="1">Host nucleolus</location>
    </subcellularLocation>
    <subcellularLocation>
        <location evidence="1">Host cytoplasm</location>
    </subcellularLocation>
    <text evidence="1">The presence of both nuclear import and nuclear export signals leads to continuous shuttling between the nucleus and cytoplasm.</text>
</comment>
<comment type="domain">
    <text evidence="1">The RNA-binding motif binds to the RRE, a 240 bp stem-and-loop structure present in incompletely spliced viral pre-mRNAs. This region also contains the NLS which mediates nuclear localization via KPNB1 binding and, when the N-terminal sequence is present, nucleolar targeting. These overlapping functions prevent Rev bound to RRE from undesirable return to the nucleus. When Rev binds the RRE, the NLS becomes masked while the NES remains accessible. The leucine-rich NES mediates binding to human XPO1.</text>
</comment>
<comment type="PTM">
    <text evidence="1">Asymmetrically arginine dimethylated at one site by host PRMT6. Methylation impairs the RNA-binding activity and export of viral RNA from the nucleus to the cytoplasm.</text>
</comment>
<comment type="PTM">
    <text evidence="1">Phosphorylated by protein kinase CK2. Presence of, and maybe binding to the N-terminus of the regulatory beta subunit of CK2 is necessary for CK2-mediated Rev's phosphorylation.</text>
</comment>
<comment type="miscellaneous">
    <text evidence="1">HIV-1 lineages are divided in three main groups, M (for Major), O (for Outlier), and N (for New, or Non-M, Non-O). The vast majority of strains found worldwide belong to the group M. Group O seems to be endemic to and largely confined to Cameroon and neighboring countries in West Central Africa, where these viruses represent a small minority of HIV-1 strains. The group N is represented by a limited number of isolates from Cameroonian persons. The group M is further subdivided in 9 clades or subtypes (A to D, F to H, J and K).</text>
</comment>
<comment type="similarity">
    <text evidence="1">Belongs to the HIV-1 REV protein family.</text>
</comment>
<protein>
    <recommendedName>
        <fullName evidence="1">Protein Rev</fullName>
    </recommendedName>
    <alternativeName>
        <fullName evidence="1">ART/TRS</fullName>
    </alternativeName>
    <alternativeName>
        <fullName evidence="1">Anti-repression transactivator</fullName>
    </alternativeName>
    <alternativeName>
        <fullName evidence="1">Regulator of expression of viral proteins</fullName>
    </alternativeName>
</protein>
<evidence type="ECO:0000255" key="1">
    <source>
        <dbReference type="HAMAP-Rule" id="MF_04077"/>
    </source>
</evidence>
<evidence type="ECO:0000256" key="2">
    <source>
        <dbReference type="SAM" id="MobiDB-lite"/>
    </source>
</evidence>
<evidence type="ECO:0000269" key="3">
    <source>
    </source>
</evidence>
<evidence type="ECO:0000269" key="4">
    <source>
    </source>
</evidence>
<evidence type="ECO:0000269" key="5">
    <source>
    </source>
</evidence>
<evidence type="ECO:0000269" key="6">
    <source>
    </source>
</evidence>
<evidence type="ECO:0000269" key="7">
    <source>
    </source>
</evidence>
<evidence type="ECO:0000269" key="8">
    <source>
    </source>
</evidence>
<evidence type="ECO:0000269" key="9">
    <source>
    </source>
</evidence>
<evidence type="ECO:0000269" key="10">
    <source>
    </source>
</evidence>
<evidence type="ECO:0000269" key="11">
    <source>
    </source>
</evidence>
<evidence type="ECO:0000269" key="12">
    <source>
    </source>
</evidence>
<evidence type="ECO:0000269" key="13">
    <source>
    </source>
</evidence>
<evidence type="ECO:0000269" key="14">
    <source>
    </source>
</evidence>
<evidence type="ECO:0000269" key="15">
    <source>
    </source>
</evidence>
<evidence type="ECO:0000269" key="16">
    <source>
    </source>
</evidence>
<evidence type="ECO:0000269" key="17">
    <source>
    </source>
</evidence>
<evidence type="ECO:0000269" key="18">
    <source>
    </source>
</evidence>
<evidence type="ECO:0000269" key="19">
    <source>
    </source>
</evidence>
<evidence type="ECO:0000269" key="20">
    <source>
    </source>
</evidence>
<evidence type="ECO:0007829" key="21">
    <source>
        <dbReference type="PDB" id="3LPH"/>
    </source>
</evidence>
<reference key="1">
    <citation type="journal article" date="1985" name="Cell">
        <title>HTLV-III env gene products synthesized in E. coli are recognized by antibodies present in the sera of AIDS patients.</title>
        <authorList>
            <person name="Crowl R."/>
            <person name="Ganguly K."/>
            <person name="Gordon M."/>
            <person name="Conroy R."/>
            <person name="Schaber M."/>
            <person name="Kramer R."/>
            <person name="Shaw G.M."/>
            <person name="Wong-Staal F."/>
            <person name="Reddy E.P."/>
        </authorList>
    </citation>
    <scope>NUCLEOTIDE SEQUENCE [GENOMIC RNA]</scope>
</reference>
<reference key="2">
    <citation type="journal article" date="1988" name="J. Virol.">
        <title>Phosphorylation of the rev gene product of human immunodeficiency virus type 1.</title>
        <authorList>
            <person name="Hauber J."/>
            <person name="Bouvier M."/>
            <person name="Malim M.H."/>
            <person name="Cullen B.R."/>
        </authorList>
    </citation>
    <scope>PHOSPHORYLATION</scope>
</reference>
<reference key="3">
    <citation type="journal article" date="1989" name="J. Virol.">
        <title>Functional significance of phosphorylation to the human immunodeficiency virus Rev protein.</title>
        <authorList>
            <person name="Cochrane A.W."/>
            <person name="Golub E."/>
            <person name="Volsky D."/>
            <person name="Ruben S."/>
            <person name="Rosen C.A."/>
        </authorList>
    </citation>
    <scope>PHOSPHORYLATION AT SER-92 AND SER-99</scope>
    <scope>MUTAGENESIS OF SER-92; SER-99; SER-106 AND SER-112</scope>
</reference>
<reference key="4">
    <citation type="journal article" date="1989" name="Nature">
        <title>The HIV-1 rev trans-activator acts through a structured target sequence to activate nuclear export of unspliced viral mRNA.</title>
        <authorList>
            <person name="Malim M.H."/>
            <person name="Hauber J."/>
            <person name="Le S.-Y."/>
            <person name="Maizel J.V."/>
            <person name="Cullen B.R."/>
        </authorList>
    </citation>
    <scope>FUNCTION</scope>
</reference>
<reference key="5">
    <citation type="journal article" date="1989" name="Cell">
        <title>Functional dissection of the HIV-1 Rev trans-activator -- derivation of a trans-dominant repressor of Rev function.</title>
        <authorList>
            <person name="Malim M.H."/>
            <person name="Bohnlein S."/>
            <person name="Hauber J."/>
            <person name="Cullen B.R."/>
        </authorList>
    </citation>
    <scope>SUBCELLULAR LOCATION</scope>
    <scope>NUCLEAR LOCALIZATION SIGNAL</scope>
    <scope>MUTAGENESIS OF 4-ARG-SER-5; 8-SER-ASP-9; ARG-17; 23-TYR--ASN-26; 38-ARG-ARG-39; 41-ARG--ARG-44; 54-SER--SER-56; 61-SER-THR-62; 67-SER-THR-68; 78-LEU-GLU-79; 91-THR-SER-92; 99-SER-PRO-100; 106-SER--ILE-109 AND 112-SER-GLY-113</scope>
</reference>
<reference key="6">
    <citation type="journal article" date="1990" name="J. Virol.">
        <title>Identification of sequences important in the nucleolar localization of human immunodeficiency virus Rev: relevance of nucleolar localization to function.</title>
        <authorList>
            <person name="Cochrane A.W."/>
            <person name="Perkins A."/>
            <person name="Rosen C.A."/>
        </authorList>
    </citation>
    <scope>SUBCELLULAR LOCATION</scope>
    <scope>NUCLEAR LOCALIZATION SIGNAL</scope>
</reference>
<reference key="7">
    <citation type="journal article" date="1991" name="Cell">
        <title>HIV-1 structural gene expression requires the binding of multiple Rev monomers to the viral RRE: implications for HIV-1 latency.</title>
        <authorList>
            <person name="Malim M.H."/>
            <person name="Cullen B.R."/>
        </authorList>
    </citation>
    <scope>SUBUNIT</scope>
    <scope>RNA-BINDING</scope>
</reference>
<reference key="8">
    <citation type="journal article" date="1991" name="Proc. Natl. Acad. Sci. U.S.A.">
        <title>Oligomerization and RNA binding domains of the type 1 human immunodeficiency virus Rev protein: a dual function for an arginine-rich binding motif.</title>
        <authorList>
            <person name="Zapp M.L."/>
            <person name="Hope T.J."/>
            <person name="Parslow T.G."/>
            <person name="Green M.R."/>
        </authorList>
    </citation>
    <scope>SUBUNIT</scope>
    <scope>RNA-BINDING</scope>
</reference>
<reference key="9">
    <citation type="journal article" date="1991" name="J. Virol.">
        <title>Functional mapping of the human immunodeficiency virus type 1 Rev RNA binding domain: new insights into the domain structure of Rev and Rex.</title>
        <authorList>
            <person name="Boehnlein E."/>
            <person name="Berger J."/>
            <person name="Hauber J."/>
        </authorList>
    </citation>
    <scope>RNA-BINDING</scope>
</reference>
<reference key="10">
    <citation type="journal article" date="1992" name="EMBO J.">
        <title>Specific binding of a basic peptide from HIV-1 Rev.</title>
        <authorList>
            <person name="Kjems J."/>
            <person name="Calnan B.J."/>
            <person name="Frankel A.D."/>
            <person name="Sharp P.A."/>
        </authorList>
    </citation>
    <scope>RNA-BINDING</scope>
</reference>
<reference key="11">
    <citation type="journal article" date="1994" name="Genes Dev.">
        <title>The HIV-1 Rev trans-activator shuttles between the nucleus and the cytoplasm.</title>
        <authorList>
            <person name="Meyer B.E."/>
            <person name="Malim M.H."/>
        </authorList>
    </citation>
    <scope>SUBCELLULAR LOCATION</scope>
</reference>
<reference key="12">
    <citation type="journal article" date="1995" name="Cell">
        <title>Identification of a signal for rapid export of proteins from the nucleus.</title>
        <authorList>
            <person name="Wen W."/>
            <person name="Meinkoth J.L."/>
            <person name="Tsien R.Y."/>
            <person name="Taylor S.S."/>
        </authorList>
    </citation>
    <scope>NUCLEAR EXPORT SIGNAL</scope>
</reference>
<reference key="13">
    <citation type="journal article" date="1996" name="Proc. Natl. Acad. Sci. U.S.A.">
        <title>Nuclear export of late HIV-1 mRNAs occurs via a cellular protein export pathway.</title>
        <authorList>
            <person name="Fridell R.A."/>
            <person name="Bogerd H.P."/>
            <person name="Cullen B.R."/>
        </authorList>
    </citation>
    <scope>FUNCTION</scope>
</reference>
<reference key="14">
    <citation type="journal article" date="1999" name="Nucleic Acids Res.">
        <title>Sensitive in vitro analysis of HIV-1 Rev multimerization.</title>
        <authorList>
            <person name="Brice P.C."/>
            <person name="Kelley A.C."/>
            <person name="Butler P.J.G."/>
        </authorList>
    </citation>
    <scope>SUBUNIT</scope>
</reference>
<reference key="15">
    <citation type="journal article" date="1999" name="Proc. Natl. Acad. Sci. U.S.A.">
        <title>Evidence for specific nucleocytoplasmic transport pathways used by leucine-rich nuclear export signals.</title>
        <authorList>
            <person name="Elfgang C."/>
            <person name="Rosorius O."/>
            <person name="Hofer L."/>
            <person name="Jaksche H."/>
            <person name="Hauber J."/>
            <person name="Bevec D."/>
        </authorList>
    </citation>
    <scope>NUCLEAR EXPORT SIGNAL</scope>
</reference>
<reference key="16">
    <citation type="journal article" date="1999" name="Mol. Cell. Biol.">
        <title>The arginine-rich domains present in human immunodeficiency virus type 1 Tat and Rev function as direct importin beta-dependent nuclear localization signals.</title>
        <authorList>
            <person name="Truant R."/>
            <person name="Cullen B.R."/>
        </authorList>
    </citation>
    <scope>NUCLEAR LOCALIZATION SIGNAL</scope>
    <scope>INTERACTION WITH HOST KPNB1</scope>
</reference>
<reference key="17">
    <citation type="journal article" date="2002" name="J. Virol.">
        <title>Expression of exogenous Sam68, the 68-kilodalton SRC-associated protein in mitosis, is able to alleviate impaired Rev function in astrocytes.</title>
        <authorList>
            <person name="Li J."/>
            <person name="Liu Y."/>
            <person name="Park I.W."/>
            <person name="He J.J."/>
        </authorList>
    </citation>
    <scope>INTERACTION WITH HOST KHDRBS1</scope>
</reference>
<reference key="18">
    <citation type="journal article" date="2002" name="J. Virol.">
        <title>The carboxy-terminal region of the human immunodeficiency virus type 1 protein Rev has multiple roles in mediating CRM1-related Rev functions.</title>
        <authorList>
            <person name="Hakata Y."/>
            <person name="Yamada M."/>
            <person name="Mabuchi N."/>
            <person name="Shida H."/>
        </authorList>
    </citation>
    <scope>INTERACTION WITH HOST XPO1</scope>
    <scope>SUBUNIT</scope>
</reference>
<reference key="19">
    <citation type="journal article" date="2004" name="Cell">
        <title>Requirement of DDX3 DEAD box RNA helicase for HIV-1 Rev-RRE export function.</title>
        <authorList>
            <person name="Yedavalli V.S."/>
            <person name="Neuveut C."/>
            <person name="Chi Y.-H."/>
            <person name="Kleiman L."/>
            <person name="Jeang K.-T."/>
        </authorList>
    </citation>
    <scope>INTERACTION WITH HOST DDX3X</scope>
</reference>
<reference key="20">
    <citation type="journal article" date="2004" name="Genes Dev.">
        <title>hRIP, a cellular cofactor for Rev function, promotes release of HIV RNAs from the perinuclear region.</title>
        <authorList>
            <person name="Sanchez-Velar N."/>
            <person name="Udofia E.B."/>
            <person name="Yu Z."/>
            <person name="Zapp M.L."/>
        </authorList>
    </citation>
    <scope>FUNCTION</scope>
</reference>
<reference key="21">
    <citation type="journal article" date="2006" name="J. Biol. Chem.">
        <title>Multiple importins function as nuclear transport receptors for the Rev protein of human immunodeficiency virus type 1.</title>
        <authorList>
            <person name="Arnold M."/>
            <person name="Nath A."/>
            <person name="Hauber J."/>
            <person name="Kehlenbach R.H."/>
        </authorList>
    </citation>
    <scope>INTERACTION WITH HOST KPNB1; TNPO1; RANBP5 AND IPO7</scope>
</reference>
<reference key="22">
    <citation type="journal article" date="1999" name="Arch. Biochem. Biophys.">
        <title>The ins and outs of HIV Rev.</title>
        <authorList>
            <person name="Hope T.J."/>
        </authorList>
    </citation>
    <scope>REVIEW</scope>
</reference>
<reference key="23">
    <citation type="journal article" date="2007" name="J. Biol. Chem.">
        <title>Interaction between HIV-1 Rev and integrase proteins: a basis for the development of anti-HIV peptides.</title>
        <authorList>
            <person name="Rosenbluh J."/>
            <person name="Hayouka Z."/>
            <person name="Loya S."/>
            <person name="Levin A."/>
            <person name="Armon-Omer A."/>
            <person name="Britan E."/>
            <person name="Hizi A."/>
            <person name="Kotler M."/>
            <person name="Friedler A."/>
            <person name="Loyter A."/>
        </authorList>
    </citation>
    <scope>INTERACTION WITH INTEGRASE</scope>
</reference>
<reference key="24">
    <citation type="journal article" date="2008" name="Virology">
        <title>The requirement of the DEAD-box protein DDX24 for the packaging of human immunodeficiency virus type 1 RNA.</title>
        <authorList>
            <person name="Ma J."/>
            <person name="Rong L."/>
            <person name="Zhou Y."/>
            <person name="Roy B.B."/>
            <person name="Lu J."/>
            <person name="Abrahamyan L."/>
            <person name="Mouland A.J."/>
            <person name="Pan Q."/>
            <person name="Liang C."/>
        </authorList>
    </citation>
    <scope>INTERACTION WITH HOST DDX24</scope>
</reference>
<reference key="25">
    <citation type="journal article" date="2010" name="Mol. Med.">
        <title>Integration of HIV-1 DNA is regulated by interplay between viral rev and cellular LEDGF/p75 proteins.</title>
        <authorList>
            <person name="Levin A."/>
            <person name="Rosenbluh J."/>
            <person name="Hayouka Z."/>
            <person name="Friedler A."/>
            <person name="Loyter A."/>
        </authorList>
    </citation>
    <scope>INTERACTION WITH HOST PSIP1</scope>
</reference>
<reference key="26">
    <citation type="journal article" date="2009" name="Virology">
        <title>Stable complex formation between HIV Rev and the nucleosome assembly protein, NAP1, affects Rev function.</title>
        <authorList>
            <person name="Cochrane A."/>
            <person name="Murley L.L."/>
            <person name="Gao M."/>
            <person name="Wong R."/>
            <person name="Clayton K."/>
            <person name="Brufatto N."/>
            <person name="Canadien V."/>
            <person name="Mamelak D."/>
            <person name="Chen T."/>
            <person name="Richards D."/>
            <person name="Zeghouf M."/>
            <person name="Greenblatt J."/>
            <person name="Burks C."/>
            <person name="Frappier L."/>
        </authorList>
    </citation>
    <scope>INTERACTION WITH HOST NAP1</scope>
</reference>
<keyword id="KW-0002">3D-structure</keyword>
<keyword id="KW-0014">AIDS</keyword>
<keyword id="KW-1035">Host cytoplasm</keyword>
<keyword id="KW-1048">Host nucleus</keyword>
<keyword id="KW-0945">Host-virus interaction</keyword>
<keyword id="KW-0488">Methylation</keyword>
<keyword id="KW-0509">mRNA transport</keyword>
<keyword id="KW-0597">Phosphoprotein</keyword>
<keyword id="KW-0694">RNA-binding</keyword>
<keyword id="KW-0813">Transport</keyword>
<name>REV_HV1H3</name>